<proteinExistence type="evidence at protein level"/>
<comment type="function">
    <text evidence="1">Required for accurate and efficient protein synthesis under certain stress conditions. May act as a fidelity factor of the translation reaction, by catalyzing a one-codon backward translocation of tRNAs on improperly translocated ribosomes. Back-translocation proceeds from a post-translocation (POST) complex to a pre-translocation (PRE) complex, thus giving elongation factor G a second chance to translocate the tRNAs correctly. Binds to ribosomes in a GTP-dependent manner.</text>
</comment>
<comment type="catalytic activity">
    <reaction evidence="1">
        <text>GTP + H2O = GDP + phosphate + H(+)</text>
        <dbReference type="Rhea" id="RHEA:19669"/>
        <dbReference type="ChEBI" id="CHEBI:15377"/>
        <dbReference type="ChEBI" id="CHEBI:15378"/>
        <dbReference type="ChEBI" id="CHEBI:37565"/>
        <dbReference type="ChEBI" id="CHEBI:43474"/>
        <dbReference type="ChEBI" id="CHEBI:58189"/>
        <dbReference type="EC" id="3.6.5.n1"/>
    </reaction>
</comment>
<comment type="subcellular location">
    <subcellularLocation>
        <location evidence="1">Cell membrane</location>
        <topology evidence="1">Peripheral membrane protein</topology>
        <orientation evidence="1">Cytoplasmic side</orientation>
    </subcellularLocation>
</comment>
<comment type="similarity">
    <text evidence="1">Belongs to the TRAFAC class translation factor GTPase superfamily. Classic translation factor GTPase family. LepA subfamily.</text>
</comment>
<evidence type="ECO:0000255" key="1">
    <source>
        <dbReference type="HAMAP-Rule" id="MF_00071"/>
    </source>
</evidence>
<sequence length="607" mass="68189">MDNEQRLKRRENIRNFSIIAHIDHGKSTLADRILENTKSVETRDMQDQLLDSMDLERERGITIKLNAVRLKYEAKDGNTYTFHLIDTPGHVDFTYEVSRSLAACEGAILVVDAAQGIEAQTLANVYLALDNELELLPVINKIDLPAAEPERVKQEIEDMIGLDQDDVVLASAKSNIGIEEILEKIVEVVPAPDGDPEAPLKALIFDSEYDPYRGVISSIRIVDGVVKAGDKIRMMATGKEFEVTEVGINTPKQLPVDELTVGDVGYIIASIKNVDDSRVGDTITLASRPASEPLQGYKKMNPMVYCGLFPIDNKNYNDLREALEKLQLNDASLEFEPESSQALGFGYRTGFLGMLHMEIIQERIEREFGIELIATAPSVIYQCILRDGSEVTVDNPAQMPDRDKIDKIFEPYVRATMMVPNDYVGAVMELCQRKRGQFINMDYLDDIRVNIVYELPLAEVVFDFFDQLKSNTKGYASFDYEFIENKESNLVKMDILLNGDKVDALSFIVHRDFAYERGKALVEKLKTLIPRQQFEVPVQAAIGQKIVARTNIKSMGKNVLAKCYGGDISRKRKLLEKQKAGKAKMKAVGNVEIPQDAFLAVLKMDDE</sequence>
<feature type="chain" id="PRO_0000176342" description="Elongation factor 4">
    <location>
        <begin position="1"/>
        <end position="607"/>
    </location>
</feature>
<feature type="domain" description="tr-type G">
    <location>
        <begin position="11"/>
        <end position="193"/>
    </location>
</feature>
<feature type="binding site" evidence="1">
    <location>
        <begin position="23"/>
        <end position="28"/>
    </location>
    <ligand>
        <name>GTP</name>
        <dbReference type="ChEBI" id="CHEBI:37565"/>
    </ligand>
</feature>
<feature type="binding site" evidence="1">
    <location>
        <begin position="140"/>
        <end position="143"/>
    </location>
    <ligand>
        <name>GTP</name>
        <dbReference type="ChEBI" id="CHEBI:37565"/>
    </ligand>
</feature>
<dbReference type="EC" id="3.6.5.n1" evidence="1"/>
<dbReference type="EMBL" id="BA000018">
    <property type="protein sequence ID" value="BAB42677.1"/>
    <property type="molecule type" value="Genomic_DNA"/>
</dbReference>
<dbReference type="PIR" id="H89939">
    <property type="entry name" value="H89939"/>
</dbReference>
<dbReference type="RefSeq" id="WP_000368338.1">
    <property type="nucleotide sequence ID" value="NC_002745.2"/>
</dbReference>
<dbReference type="SMR" id="P65272"/>
<dbReference type="EnsemblBacteria" id="BAB42677">
    <property type="protein sequence ID" value="BAB42677"/>
    <property type="gene ID" value="BAB42677"/>
</dbReference>
<dbReference type="KEGG" id="sau:SA1413"/>
<dbReference type="HOGENOM" id="CLU_009995_3_3_9"/>
<dbReference type="GO" id="GO:0005886">
    <property type="term" value="C:plasma membrane"/>
    <property type="evidence" value="ECO:0007669"/>
    <property type="project" value="UniProtKB-SubCell"/>
</dbReference>
<dbReference type="GO" id="GO:0005525">
    <property type="term" value="F:GTP binding"/>
    <property type="evidence" value="ECO:0007669"/>
    <property type="project" value="UniProtKB-UniRule"/>
</dbReference>
<dbReference type="GO" id="GO:0003924">
    <property type="term" value="F:GTPase activity"/>
    <property type="evidence" value="ECO:0007669"/>
    <property type="project" value="UniProtKB-UniRule"/>
</dbReference>
<dbReference type="GO" id="GO:0043022">
    <property type="term" value="F:ribosome binding"/>
    <property type="evidence" value="ECO:0007669"/>
    <property type="project" value="UniProtKB-UniRule"/>
</dbReference>
<dbReference type="GO" id="GO:0003746">
    <property type="term" value="F:translation elongation factor activity"/>
    <property type="evidence" value="ECO:0007669"/>
    <property type="project" value="UniProtKB-UniRule"/>
</dbReference>
<dbReference type="GO" id="GO:0045727">
    <property type="term" value="P:positive regulation of translation"/>
    <property type="evidence" value="ECO:0007669"/>
    <property type="project" value="UniProtKB-UniRule"/>
</dbReference>
<dbReference type="CDD" id="cd03699">
    <property type="entry name" value="EF4_II"/>
    <property type="match status" value="1"/>
</dbReference>
<dbReference type="CDD" id="cd16260">
    <property type="entry name" value="EF4_III"/>
    <property type="match status" value="1"/>
</dbReference>
<dbReference type="CDD" id="cd01890">
    <property type="entry name" value="LepA"/>
    <property type="match status" value="1"/>
</dbReference>
<dbReference type="CDD" id="cd03709">
    <property type="entry name" value="lepA_C"/>
    <property type="match status" value="1"/>
</dbReference>
<dbReference type="FunFam" id="3.40.50.300:FF:000078">
    <property type="entry name" value="Elongation factor 4"/>
    <property type="match status" value="1"/>
</dbReference>
<dbReference type="FunFam" id="2.40.30.10:FF:000015">
    <property type="entry name" value="Translation factor GUF1, mitochondrial"/>
    <property type="match status" value="1"/>
</dbReference>
<dbReference type="FunFam" id="3.30.70.240:FF:000007">
    <property type="entry name" value="Translation factor GUF1, mitochondrial"/>
    <property type="match status" value="1"/>
</dbReference>
<dbReference type="FunFam" id="3.30.70.2570:FF:000001">
    <property type="entry name" value="Translation factor GUF1, mitochondrial"/>
    <property type="match status" value="1"/>
</dbReference>
<dbReference type="FunFam" id="3.30.70.870:FF:000004">
    <property type="entry name" value="Translation factor GUF1, mitochondrial"/>
    <property type="match status" value="1"/>
</dbReference>
<dbReference type="Gene3D" id="3.30.70.240">
    <property type="match status" value="1"/>
</dbReference>
<dbReference type="Gene3D" id="3.30.70.2570">
    <property type="entry name" value="Elongation factor 4, C-terminal domain"/>
    <property type="match status" value="1"/>
</dbReference>
<dbReference type="Gene3D" id="3.30.70.870">
    <property type="entry name" value="Elongation Factor G (Translational Gtpase), domain 3"/>
    <property type="match status" value="1"/>
</dbReference>
<dbReference type="Gene3D" id="3.40.50.300">
    <property type="entry name" value="P-loop containing nucleotide triphosphate hydrolases"/>
    <property type="match status" value="1"/>
</dbReference>
<dbReference type="Gene3D" id="2.40.30.10">
    <property type="entry name" value="Translation factors"/>
    <property type="match status" value="1"/>
</dbReference>
<dbReference type="HAMAP" id="MF_00071">
    <property type="entry name" value="LepA"/>
    <property type="match status" value="1"/>
</dbReference>
<dbReference type="InterPro" id="IPR006297">
    <property type="entry name" value="EF-4"/>
</dbReference>
<dbReference type="InterPro" id="IPR035647">
    <property type="entry name" value="EFG_III/V"/>
</dbReference>
<dbReference type="InterPro" id="IPR000640">
    <property type="entry name" value="EFG_V-like"/>
</dbReference>
<dbReference type="InterPro" id="IPR004161">
    <property type="entry name" value="EFTu-like_2"/>
</dbReference>
<dbReference type="InterPro" id="IPR031157">
    <property type="entry name" value="G_TR_CS"/>
</dbReference>
<dbReference type="InterPro" id="IPR038363">
    <property type="entry name" value="LepA_C_sf"/>
</dbReference>
<dbReference type="InterPro" id="IPR013842">
    <property type="entry name" value="LepA_CTD"/>
</dbReference>
<dbReference type="InterPro" id="IPR035654">
    <property type="entry name" value="LepA_IV"/>
</dbReference>
<dbReference type="InterPro" id="IPR027417">
    <property type="entry name" value="P-loop_NTPase"/>
</dbReference>
<dbReference type="InterPro" id="IPR005225">
    <property type="entry name" value="Small_GTP-bd"/>
</dbReference>
<dbReference type="InterPro" id="IPR000795">
    <property type="entry name" value="T_Tr_GTP-bd_dom"/>
</dbReference>
<dbReference type="InterPro" id="IPR009000">
    <property type="entry name" value="Transl_B-barrel_sf"/>
</dbReference>
<dbReference type="NCBIfam" id="TIGR01393">
    <property type="entry name" value="lepA"/>
    <property type="match status" value="1"/>
</dbReference>
<dbReference type="NCBIfam" id="TIGR00231">
    <property type="entry name" value="small_GTP"/>
    <property type="match status" value="1"/>
</dbReference>
<dbReference type="PANTHER" id="PTHR43512:SF4">
    <property type="entry name" value="TRANSLATION FACTOR GUF1 HOMOLOG, CHLOROPLASTIC"/>
    <property type="match status" value="1"/>
</dbReference>
<dbReference type="PANTHER" id="PTHR43512">
    <property type="entry name" value="TRANSLATION FACTOR GUF1-RELATED"/>
    <property type="match status" value="1"/>
</dbReference>
<dbReference type="Pfam" id="PF00679">
    <property type="entry name" value="EFG_C"/>
    <property type="match status" value="1"/>
</dbReference>
<dbReference type="Pfam" id="PF00009">
    <property type="entry name" value="GTP_EFTU"/>
    <property type="match status" value="1"/>
</dbReference>
<dbReference type="Pfam" id="PF03144">
    <property type="entry name" value="GTP_EFTU_D2"/>
    <property type="match status" value="1"/>
</dbReference>
<dbReference type="Pfam" id="PF06421">
    <property type="entry name" value="LepA_C"/>
    <property type="match status" value="1"/>
</dbReference>
<dbReference type="PRINTS" id="PR00315">
    <property type="entry name" value="ELONGATNFCT"/>
</dbReference>
<dbReference type="SMART" id="SM00838">
    <property type="entry name" value="EFG_C"/>
    <property type="match status" value="1"/>
</dbReference>
<dbReference type="SUPFAM" id="SSF54980">
    <property type="entry name" value="EF-G C-terminal domain-like"/>
    <property type="match status" value="2"/>
</dbReference>
<dbReference type="SUPFAM" id="SSF52540">
    <property type="entry name" value="P-loop containing nucleoside triphosphate hydrolases"/>
    <property type="match status" value="1"/>
</dbReference>
<dbReference type="SUPFAM" id="SSF50447">
    <property type="entry name" value="Translation proteins"/>
    <property type="match status" value="1"/>
</dbReference>
<dbReference type="PROSITE" id="PS00301">
    <property type="entry name" value="G_TR_1"/>
    <property type="match status" value="1"/>
</dbReference>
<dbReference type="PROSITE" id="PS51722">
    <property type="entry name" value="G_TR_2"/>
    <property type="match status" value="1"/>
</dbReference>
<organism>
    <name type="scientific">Staphylococcus aureus (strain N315)</name>
    <dbReference type="NCBI Taxonomy" id="158879"/>
    <lineage>
        <taxon>Bacteria</taxon>
        <taxon>Bacillati</taxon>
        <taxon>Bacillota</taxon>
        <taxon>Bacilli</taxon>
        <taxon>Bacillales</taxon>
        <taxon>Staphylococcaceae</taxon>
        <taxon>Staphylococcus</taxon>
    </lineage>
</organism>
<gene>
    <name evidence="1" type="primary">lepA</name>
    <name type="ordered locus">SA1413</name>
</gene>
<protein>
    <recommendedName>
        <fullName evidence="1">Elongation factor 4</fullName>
        <shortName evidence="1">EF-4</shortName>
        <ecNumber evidence="1">3.6.5.n1</ecNumber>
    </recommendedName>
    <alternativeName>
        <fullName evidence="1">Ribosomal back-translocase LepA</fullName>
    </alternativeName>
</protein>
<accession>P65272</accession>
<accession>Q99TR4</accession>
<keyword id="KW-1003">Cell membrane</keyword>
<keyword id="KW-0342">GTP-binding</keyword>
<keyword id="KW-0378">Hydrolase</keyword>
<keyword id="KW-0472">Membrane</keyword>
<keyword id="KW-0547">Nucleotide-binding</keyword>
<keyword id="KW-0648">Protein biosynthesis</keyword>
<name>LEPA_STAAN</name>
<reference key="1">
    <citation type="journal article" date="2001" name="Lancet">
        <title>Whole genome sequencing of meticillin-resistant Staphylococcus aureus.</title>
        <authorList>
            <person name="Kuroda M."/>
            <person name="Ohta T."/>
            <person name="Uchiyama I."/>
            <person name="Baba T."/>
            <person name="Yuzawa H."/>
            <person name="Kobayashi I."/>
            <person name="Cui L."/>
            <person name="Oguchi A."/>
            <person name="Aoki K."/>
            <person name="Nagai Y."/>
            <person name="Lian J.-Q."/>
            <person name="Ito T."/>
            <person name="Kanamori M."/>
            <person name="Matsumaru H."/>
            <person name="Maruyama A."/>
            <person name="Murakami H."/>
            <person name="Hosoyama A."/>
            <person name="Mizutani-Ui Y."/>
            <person name="Takahashi N.K."/>
            <person name="Sawano T."/>
            <person name="Inoue R."/>
            <person name="Kaito C."/>
            <person name="Sekimizu K."/>
            <person name="Hirakawa H."/>
            <person name="Kuhara S."/>
            <person name="Goto S."/>
            <person name="Yabuzaki J."/>
            <person name="Kanehisa M."/>
            <person name="Yamashita A."/>
            <person name="Oshima K."/>
            <person name="Furuya K."/>
            <person name="Yoshino C."/>
            <person name="Shiba T."/>
            <person name="Hattori M."/>
            <person name="Ogasawara N."/>
            <person name="Hayashi H."/>
            <person name="Hiramatsu K."/>
        </authorList>
    </citation>
    <scope>NUCLEOTIDE SEQUENCE [LARGE SCALE GENOMIC DNA]</scope>
    <source>
        <strain>N315</strain>
    </source>
</reference>
<reference key="2">
    <citation type="submission" date="2007-10" db="UniProtKB">
        <title>Shotgun proteomic analysis of total and membrane protein extracts of S. aureus strain N315.</title>
        <authorList>
            <person name="Vaezzadeh A.R."/>
            <person name="Deshusses J."/>
            <person name="Lescuyer P."/>
            <person name="Hochstrasser D.F."/>
        </authorList>
    </citation>
    <scope>IDENTIFICATION BY MASS SPECTROMETRY [LARGE SCALE ANALYSIS]</scope>
    <source>
        <strain>N315</strain>
    </source>
</reference>